<sequence>MKKSFIHQQEEISFVKNTFTQYLIAKLDVVEVQGPILSRVGDGMQDNLSGTENPVSVNVLKIPNATFEVVHSLAKWKRHTLARFGFNEGEGLVVNMKALRPDEDSLDQTHSVYVDQWDWEKVIPDGKRNLAYLKETVETIYKVIRLTELAVEARYDIEAVLPKKITFIHTEELVAKYPDLTPKERENAITKEFGAVFLIGIGGVLPDGKPHDGRAPDYDDWTTETENGYHGLNGDILVWNDQLGSAFELSSMGIRVDEEALKRQVEMTGDQDRLAFDWHKSLLNGLFPLTIGGGIGQSRMVMFLLRKKHIGEVQTSVWPQEVRDSYDNIL</sequence>
<reference key="1">
    <citation type="journal article" date="2002" name="Proc. Natl. Acad. Sci. U.S.A.">
        <title>Genome sequence of a serotype M3 strain of group A Streptococcus: phage-encoded toxins, the high-virulence phenotype, and clone emergence.</title>
        <authorList>
            <person name="Beres S.B."/>
            <person name="Sylva G.L."/>
            <person name="Barbian K.D."/>
            <person name="Lei B."/>
            <person name="Hoff J.S."/>
            <person name="Mammarella N.D."/>
            <person name="Liu M.-Y."/>
            <person name="Smoot J.C."/>
            <person name="Porcella S.F."/>
            <person name="Parkins L.D."/>
            <person name="Campbell D.S."/>
            <person name="Smith T.M."/>
            <person name="McCormick J.K."/>
            <person name="Leung D.Y.M."/>
            <person name="Schlievert P.M."/>
            <person name="Musser J.M."/>
        </authorList>
    </citation>
    <scope>NUCLEOTIDE SEQUENCE [LARGE SCALE GENOMIC DNA]</scope>
    <source>
        <strain>ATCC BAA-595 / MGAS315</strain>
    </source>
</reference>
<gene>
    <name evidence="1" type="primary">asnA</name>
    <name type="ordered locus">SpyM3_1190</name>
</gene>
<keyword id="KW-0028">Amino-acid biosynthesis</keyword>
<keyword id="KW-0061">Asparagine biosynthesis</keyword>
<keyword id="KW-0067">ATP-binding</keyword>
<keyword id="KW-0963">Cytoplasm</keyword>
<keyword id="KW-0436">Ligase</keyword>
<keyword id="KW-0547">Nucleotide-binding</keyword>
<name>ASNA_STRP3</name>
<organism>
    <name type="scientific">Streptococcus pyogenes serotype M3 (strain ATCC BAA-595 / MGAS315)</name>
    <dbReference type="NCBI Taxonomy" id="198466"/>
    <lineage>
        <taxon>Bacteria</taxon>
        <taxon>Bacillati</taxon>
        <taxon>Bacillota</taxon>
        <taxon>Bacilli</taxon>
        <taxon>Lactobacillales</taxon>
        <taxon>Streptococcaceae</taxon>
        <taxon>Streptococcus</taxon>
    </lineage>
</organism>
<protein>
    <recommendedName>
        <fullName evidence="1">Aspartate--ammonia ligase</fullName>
        <ecNumber evidence="1">6.3.1.1</ecNumber>
    </recommendedName>
    <alternativeName>
        <fullName evidence="1">Asparagine synthetase A</fullName>
    </alternativeName>
</protein>
<feature type="chain" id="PRO_0000195894" description="Aspartate--ammonia ligase">
    <location>
        <begin position="1"/>
        <end position="330"/>
    </location>
</feature>
<accession>P0CZ84</accession>
<accession>P63625</accession>
<accession>Q8P055</accession>
<proteinExistence type="inferred from homology"/>
<dbReference type="EC" id="6.3.1.1" evidence="1"/>
<dbReference type="EMBL" id="AE014074">
    <property type="protein sequence ID" value="AAM79797.1"/>
    <property type="molecule type" value="Genomic_DNA"/>
</dbReference>
<dbReference type="RefSeq" id="WP_002983817.1">
    <property type="nucleotide sequence ID" value="NC_004070.1"/>
</dbReference>
<dbReference type="SMR" id="P0CZ84"/>
<dbReference type="KEGG" id="spg:SpyM3_1190"/>
<dbReference type="HOGENOM" id="CLU_071543_0_0_9"/>
<dbReference type="UniPathway" id="UPA00134">
    <property type="reaction ID" value="UER00194"/>
</dbReference>
<dbReference type="Proteomes" id="UP000000564">
    <property type="component" value="Chromosome"/>
</dbReference>
<dbReference type="GO" id="GO:0005829">
    <property type="term" value="C:cytosol"/>
    <property type="evidence" value="ECO:0007669"/>
    <property type="project" value="TreeGrafter"/>
</dbReference>
<dbReference type="GO" id="GO:0004071">
    <property type="term" value="F:aspartate-ammonia ligase activity"/>
    <property type="evidence" value="ECO:0007669"/>
    <property type="project" value="UniProtKB-UniRule"/>
</dbReference>
<dbReference type="GO" id="GO:0005524">
    <property type="term" value="F:ATP binding"/>
    <property type="evidence" value="ECO:0007669"/>
    <property type="project" value="UniProtKB-UniRule"/>
</dbReference>
<dbReference type="GO" id="GO:0140096">
    <property type="term" value="F:catalytic activity, acting on a protein"/>
    <property type="evidence" value="ECO:0007669"/>
    <property type="project" value="UniProtKB-ARBA"/>
</dbReference>
<dbReference type="GO" id="GO:0016740">
    <property type="term" value="F:transferase activity"/>
    <property type="evidence" value="ECO:0007669"/>
    <property type="project" value="UniProtKB-ARBA"/>
</dbReference>
<dbReference type="GO" id="GO:0070981">
    <property type="term" value="P:L-asparagine biosynthetic process"/>
    <property type="evidence" value="ECO:0007669"/>
    <property type="project" value="UniProtKB-UniRule"/>
</dbReference>
<dbReference type="CDD" id="cd00645">
    <property type="entry name" value="AsnA"/>
    <property type="match status" value="1"/>
</dbReference>
<dbReference type="Gene3D" id="3.30.930.10">
    <property type="entry name" value="Bira Bifunctional Protein, Domain 2"/>
    <property type="match status" value="1"/>
</dbReference>
<dbReference type="HAMAP" id="MF_00555">
    <property type="entry name" value="AsnA"/>
    <property type="match status" value="1"/>
</dbReference>
<dbReference type="InterPro" id="IPR006195">
    <property type="entry name" value="aa-tRNA-synth_II"/>
</dbReference>
<dbReference type="InterPro" id="IPR045864">
    <property type="entry name" value="aa-tRNA-synth_II/BPL/LPL"/>
</dbReference>
<dbReference type="InterPro" id="IPR004618">
    <property type="entry name" value="AsnA"/>
</dbReference>
<dbReference type="NCBIfam" id="TIGR00669">
    <property type="entry name" value="asnA"/>
    <property type="match status" value="1"/>
</dbReference>
<dbReference type="PANTHER" id="PTHR30073">
    <property type="entry name" value="ASPARTATE--AMMONIA LIGASE"/>
    <property type="match status" value="1"/>
</dbReference>
<dbReference type="PANTHER" id="PTHR30073:SF5">
    <property type="entry name" value="ASPARTATE--AMMONIA LIGASE"/>
    <property type="match status" value="1"/>
</dbReference>
<dbReference type="Pfam" id="PF03590">
    <property type="entry name" value="AsnA"/>
    <property type="match status" value="1"/>
</dbReference>
<dbReference type="PIRSF" id="PIRSF001555">
    <property type="entry name" value="Asp_ammon_ligase"/>
    <property type="match status" value="1"/>
</dbReference>
<dbReference type="SUPFAM" id="SSF55681">
    <property type="entry name" value="Class II aaRS and biotin synthetases"/>
    <property type="match status" value="1"/>
</dbReference>
<dbReference type="PROSITE" id="PS50862">
    <property type="entry name" value="AA_TRNA_LIGASE_II"/>
    <property type="match status" value="1"/>
</dbReference>
<comment type="catalytic activity">
    <reaction evidence="1">
        <text>L-aspartate + NH4(+) + ATP = L-asparagine + AMP + diphosphate + H(+)</text>
        <dbReference type="Rhea" id="RHEA:11372"/>
        <dbReference type="ChEBI" id="CHEBI:15378"/>
        <dbReference type="ChEBI" id="CHEBI:28938"/>
        <dbReference type="ChEBI" id="CHEBI:29991"/>
        <dbReference type="ChEBI" id="CHEBI:30616"/>
        <dbReference type="ChEBI" id="CHEBI:33019"/>
        <dbReference type="ChEBI" id="CHEBI:58048"/>
        <dbReference type="ChEBI" id="CHEBI:456215"/>
        <dbReference type="EC" id="6.3.1.1"/>
    </reaction>
</comment>
<comment type="pathway">
    <text evidence="1">Amino-acid biosynthesis; L-asparagine biosynthesis; L-asparagine from L-aspartate (ammonia route): step 1/1.</text>
</comment>
<comment type="subcellular location">
    <subcellularLocation>
        <location evidence="1">Cytoplasm</location>
    </subcellularLocation>
</comment>
<comment type="similarity">
    <text evidence="1">Belongs to the class-II aminoacyl-tRNA synthetase family. AsnA subfamily.</text>
</comment>
<evidence type="ECO:0000255" key="1">
    <source>
        <dbReference type="HAMAP-Rule" id="MF_00555"/>
    </source>
</evidence>